<gene>
    <name type="primary">46</name>
</gene>
<keyword id="KW-0067">ATP-binding</keyword>
<keyword id="KW-1261">Bacterial host gene expression shutoff by virus</keyword>
<keyword id="KW-1247">Degradation of host chromosome by virus</keyword>
<keyword id="KW-0227">DNA damage</keyword>
<keyword id="KW-0234">DNA repair</keyword>
<keyword id="KW-0238">DNA-binding</keyword>
<keyword id="KW-0269">Exonuclease</keyword>
<keyword id="KW-1190">Host gene expression shutoff by virus</keyword>
<keyword id="KW-0945">Host-virus interaction</keyword>
<keyword id="KW-0378">Hydrolase</keyword>
<keyword id="KW-0540">Nuclease</keyword>
<keyword id="KW-0547">Nucleotide-binding</keyword>
<keyword id="KW-1185">Reference proteome</keyword>
<organism>
    <name type="scientific">Enterobacteria phage T4</name>
    <name type="common">Bacteriophage T4</name>
    <dbReference type="NCBI Taxonomy" id="10665"/>
    <lineage>
        <taxon>Viruses</taxon>
        <taxon>Duplodnaviria</taxon>
        <taxon>Heunggongvirae</taxon>
        <taxon>Uroviricota</taxon>
        <taxon>Caudoviricetes</taxon>
        <taxon>Straboviridae</taxon>
        <taxon>Tevenvirinae</taxon>
        <taxon>Tequatrovirus</taxon>
    </lineage>
</organism>
<protein>
    <recommendedName>
        <fullName>Exonuclease subunit 2</fullName>
        <ecNumber>3.1.11.-</ecNumber>
    </recommendedName>
    <alternativeName>
        <fullName>Gene product 46</fullName>
        <shortName>gp46</shortName>
    </alternativeName>
</protein>
<name>EXO2_BPT4</name>
<proteinExistence type="evidence at protein level"/>
<evidence type="ECO:0000255" key="1"/>
<evidence type="ECO:0000269" key="2">
    <source>
    </source>
</evidence>
<evidence type="ECO:0000269" key="3">
    <source>
    </source>
</evidence>
<evidence type="ECO:0000269" key="4">
    <source>
    </source>
</evidence>
<evidence type="ECO:0000305" key="5"/>
<feature type="chain" id="PRO_0000164937" description="Exonuclease subunit 2">
    <location>
        <begin position="1"/>
        <end position="560"/>
    </location>
</feature>
<feature type="binding site" evidence="1">
    <location>
        <begin position="36"/>
        <end position="43"/>
    </location>
    <ligand>
        <name>ATP</name>
        <dbReference type="ChEBI" id="CHEBI:30616"/>
    </ligand>
</feature>
<sequence length="560" mass="63613">MKNFKLNRVKYKNIMSVGQNGIDIQLDKVQKTLITGRNGGGKSTMLEAITFGLFGKPFRDVKKGQLINSTNKKELLVELWMEYDEKKYYIKRGQKPNVFEITVNGTRLNESASSKDFQAEFEQLIGMSYASFKQIVVLGTAGYTPFMGLSTPARRKLVEDLLEVGTLAEMDKLNKALIRELNSQNQVLDVKKDSIIQQIKIYNDNVERQKKLTGDNLTRLQNMYDDLAKEARTLKSEIEEANERLVNIVLDEDPTDAFNKIGQEAFLIKSKIDSYNKVINMYHEGGLCPTCLSQLSSGDKVVSKIKDKVSECTHSFEQLSTHRDNLKVLVDEYRDNIKTQQSLANDIRNKKQSLIAAVDKAKKVKAAIEKASSEFIDHADEIALLQEELDKIVKTKTNLVMEKYHRGILTDMLKDSGIKGAIIKKYIPLFNKQINHYLKIMEADYVFTLDEEFNETIKSRGREDFSYASFSEGEKARIDIALLFTWRDIASIVSGVSISTLILDEVFDGSFDAEGIKGVANIINSMKNTNVFIISHKDHDPQEYGQHLQMKKVGRFTVMV</sequence>
<comment type="function">
    <text evidence="2 3 4">Exonuclease that plays a role in viral genome replication, DNA recombination, and host DNA degradation.</text>
</comment>
<comment type="subunit">
    <text>Consists of two subunits: gp46 and gp47.</text>
</comment>
<comment type="similarity">
    <text evidence="5">To phage T5 protein D13 and to yeast RAD52.</text>
</comment>
<dbReference type="EC" id="3.1.11.-"/>
<dbReference type="EMBL" id="X01804">
    <property type="protein sequence ID" value="CAA25945.1"/>
    <property type="molecule type" value="Genomic_DNA"/>
</dbReference>
<dbReference type="EMBL" id="M15080">
    <property type="protein sequence ID" value="AAA32516.1"/>
    <property type="molecule type" value="Genomic_DNA"/>
</dbReference>
<dbReference type="EMBL" id="AF158101">
    <property type="protein sequence ID" value="AAD42472.1"/>
    <property type="molecule type" value="Genomic_DNA"/>
</dbReference>
<dbReference type="EMBL" id="M10160">
    <property type="protein sequence ID" value="AAC05392.1"/>
    <property type="molecule type" value="Genomic_DNA"/>
</dbReference>
<dbReference type="PIR" id="A04298">
    <property type="entry name" value="NCBPX6"/>
</dbReference>
<dbReference type="RefSeq" id="NP_049669.1">
    <property type="nucleotide sequence ID" value="NC_000866.4"/>
</dbReference>
<dbReference type="SMR" id="P04522"/>
<dbReference type="GeneID" id="1258822"/>
<dbReference type="KEGG" id="vg:1258822"/>
<dbReference type="OrthoDB" id="6017at10239"/>
<dbReference type="Proteomes" id="UP000009087">
    <property type="component" value="Segment"/>
</dbReference>
<dbReference type="GO" id="GO:0005524">
    <property type="term" value="F:ATP binding"/>
    <property type="evidence" value="ECO:0007669"/>
    <property type="project" value="UniProtKB-KW"/>
</dbReference>
<dbReference type="GO" id="GO:0016887">
    <property type="term" value="F:ATP hydrolysis activity"/>
    <property type="evidence" value="ECO:0007669"/>
    <property type="project" value="InterPro"/>
</dbReference>
<dbReference type="GO" id="GO:0003677">
    <property type="term" value="F:DNA binding"/>
    <property type="evidence" value="ECO:0007669"/>
    <property type="project" value="UniProtKB-KW"/>
</dbReference>
<dbReference type="GO" id="GO:0004527">
    <property type="term" value="F:exonuclease activity"/>
    <property type="evidence" value="ECO:0007669"/>
    <property type="project" value="UniProtKB-KW"/>
</dbReference>
<dbReference type="GO" id="GO:0099015">
    <property type="term" value="P:degradation of host chromosome by virus"/>
    <property type="evidence" value="ECO:0007669"/>
    <property type="project" value="UniProtKB-KW"/>
</dbReference>
<dbReference type="GO" id="GO:0006302">
    <property type="term" value="P:double-strand break repair"/>
    <property type="evidence" value="ECO:0007669"/>
    <property type="project" value="InterPro"/>
</dbReference>
<dbReference type="GO" id="GO:0039657">
    <property type="term" value="P:symbiont-mediated suppression of host gene expression"/>
    <property type="evidence" value="ECO:0007669"/>
    <property type="project" value="UniProtKB-KW"/>
</dbReference>
<dbReference type="Gene3D" id="3.40.50.300">
    <property type="entry name" value="P-loop containing nucleotide triphosphate hydrolases"/>
    <property type="match status" value="2"/>
</dbReference>
<dbReference type="InterPro" id="IPR027417">
    <property type="entry name" value="P-loop_NTPase"/>
</dbReference>
<dbReference type="InterPro" id="IPR038729">
    <property type="entry name" value="Rad50/SbcC_AAA"/>
</dbReference>
<dbReference type="PANTHER" id="PTHR32114">
    <property type="entry name" value="ABC TRANSPORTER ABCH.3"/>
    <property type="match status" value="1"/>
</dbReference>
<dbReference type="PANTHER" id="PTHR32114:SF2">
    <property type="entry name" value="ABC TRANSPORTER ABCH.3"/>
    <property type="match status" value="1"/>
</dbReference>
<dbReference type="Pfam" id="PF13476">
    <property type="entry name" value="AAA_23"/>
    <property type="match status" value="1"/>
</dbReference>
<dbReference type="SUPFAM" id="SSF52540">
    <property type="entry name" value="P-loop containing nucleoside triphosphate hydrolases"/>
    <property type="match status" value="1"/>
</dbReference>
<dbReference type="SUPFAM" id="SSF75712">
    <property type="entry name" value="Rad50 coiled-coil Zn hook"/>
    <property type="match status" value="1"/>
</dbReference>
<organismHost>
    <name type="scientific">Escherichia coli</name>
    <dbReference type="NCBI Taxonomy" id="562"/>
</organismHost>
<accession>P04522</accession>
<reference key="1">
    <citation type="journal article" date="1985" name="EMBO J.">
        <title>Genes 55, alpha gt, 47 and 46 of bacteriophage T4: the genomic organization as deduced by sequence analysis.</title>
        <authorList>
            <person name="Gram H."/>
            <person name="Rueger W."/>
        </authorList>
    </citation>
    <scope>NUCLEOTIDE SEQUENCE [GENOMIC DNA]</scope>
</reference>
<reference key="2">
    <citation type="journal article" date="2003" name="Microbiol. Mol. Biol. Rev.">
        <title>Bacteriophage T4 genome.</title>
        <authorList>
            <person name="Miller E.S."/>
            <person name="Kutter E."/>
            <person name="Mosig G."/>
            <person name="Arisaka F."/>
            <person name="Kunisawa T."/>
            <person name="Ruger W."/>
        </authorList>
    </citation>
    <scope>NUCLEOTIDE SEQUENCE [LARGE SCALE GENOMIC DNA]</scope>
</reference>
<reference key="3">
    <citation type="submission" date="1987-04" db="EMBL/GenBank/DDBJ databases">
        <authorList>
            <person name="Hsu T."/>
            <person name="Karam J."/>
        </authorList>
    </citation>
    <scope>NUCLEOTIDE SEQUENCE [GENOMIC DNA] OF 478-560</scope>
</reference>
<reference key="4">
    <citation type="journal article" date="1968" name="J. Mol. Biol.">
        <title>Degradation of cytosin-containing bacterial and bacteriophage DNA after infection of Escherichia coli B with bacteriophage T4D wild type and with mutants defective in genes 46, 47 and 56.</title>
        <authorList>
            <person name="Kutter E.M."/>
            <person name="Wiberg J.S."/>
        </authorList>
    </citation>
    <scope>FUNCTION IN HOST DNA DEGRADATION</scope>
</reference>
<reference key="5">
    <citation type="journal article" date="1969" name="J. Virol.">
        <title>Variations in genetic recombination due to amber mutations in T4D bacteriophage.</title>
        <authorList>
            <person name="Berger H."/>
            <person name="Warren A.J."/>
            <person name="Fry K.E."/>
        </authorList>
    </citation>
    <scope>FUNCTION IN DNA RECOMBINATION</scope>
</reference>
<reference key="6">
    <citation type="journal article" date="1981" name="J. Virol.">
        <title>Membrane-associated DNase activity controlled by genes 46 and 47 of bacteriophage T4D and elevated DNase activity associated with the T4 das mutation.</title>
        <authorList>
            <person name="Mickelson C."/>
            <person name="Wiberg J.S."/>
        </authorList>
    </citation>
    <scope>FUNCTION</scope>
</reference>